<reference key="1">
    <citation type="journal article" date="2004" name="Nature">
        <title>Genome sequence of the Brown Norway rat yields insights into mammalian evolution.</title>
        <authorList>
            <person name="Gibbs R.A."/>
            <person name="Weinstock G.M."/>
            <person name="Metzker M.L."/>
            <person name="Muzny D.M."/>
            <person name="Sodergren E.J."/>
            <person name="Scherer S."/>
            <person name="Scott G."/>
            <person name="Steffen D."/>
            <person name="Worley K.C."/>
            <person name="Burch P.E."/>
            <person name="Okwuonu G."/>
            <person name="Hines S."/>
            <person name="Lewis L."/>
            <person name="Deramo C."/>
            <person name="Delgado O."/>
            <person name="Dugan-Rocha S."/>
            <person name="Miner G."/>
            <person name="Morgan M."/>
            <person name="Hawes A."/>
            <person name="Gill R."/>
            <person name="Holt R.A."/>
            <person name="Adams M.D."/>
            <person name="Amanatides P.G."/>
            <person name="Baden-Tillson H."/>
            <person name="Barnstead M."/>
            <person name="Chin S."/>
            <person name="Evans C.A."/>
            <person name="Ferriera S."/>
            <person name="Fosler C."/>
            <person name="Glodek A."/>
            <person name="Gu Z."/>
            <person name="Jennings D."/>
            <person name="Kraft C.L."/>
            <person name="Nguyen T."/>
            <person name="Pfannkoch C.M."/>
            <person name="Sitter C."/>
            <person name="Sutton G.G."/>
            <person name="Venter J.C."/>
            <person name="Woodage T."/>
            <person name="Smith D."/>
            <person name="Lee H.-M."/>
            <person name="Gustafson E."/>
            <person name="Cahill P."/>
            <person name="Kana A."/>
            <person name="Doucette-Stamm L."/>
            <person name="Weinstock K."/>
            <person name="Fechtel K."/>
            <person name="Weiss R.B."/>
            <person name="Dunn D.M."/>
            <person name="Green E.D."/>
            <person name="Blakesley R.W."/>
            <person name="Bouffard G.G."/>
            <person name="De Jong P.J."/>
            <person name="Osoegawa K."/>
            <person name="Zhu B."/>
            <person name="Marra M."/>
            <person name="Schein J."/>
            <person name="Bosdet I."/>
            <person name="Fjell C."/>
            <person name="Jones S."/>
            <person name="Krzywinski M."/>
            <person name="Mathewson C."/>
            <person name="Siddiqui A."/>
            <person name="Wye N."/>
            <person name="McPherson J."/>
            <person name="Zhao S."/>
            <person name="Fraser C.M."/>
            <person name="Shetty J."/>
            <person name="Shatsman S."/>
            <person name="Geer K."/>
            <person name="Chen Y."/>
            <person name="Abramzon S."/>
            <person name="Nierman W.C."/>
            <person name="Havlak P.H."/>
            <person name="Chen R."/>
            <person name="Durbin K.J."/>
            <person name="Egan A."/>
            <person name="Ren Y."/>
            <person name="Song X.-Z."/>
            <person name="Li B."/>
            <person name="Liu Y."/>
            <person name="Qin X."/>
            <person name="Cawley S."/>
            <person name="Cooney A.J."/>
            <person name="D'Souza L.M."/>
            <person name="Martin K."/>
            <person name="Wu J.Q."/>
            <person name="Gonzalez-Garay M.L."/>
            <person name="Jackson A.R."/>
            <person name="Kalafus K.J."/>
            <person name="McLeod M.P."/>
            <person name="Milosavljevic A."/>
            <person name="Virk D."/>
            <person name="Volkov A."/>
            <person name="Wheeler D.A."/>
            <person name="Zhang Z."/>
            <person name="Bailey J.A."/>
            <person name="Eichler E.E."/>
            <person name="Tuzun E."/>
            <person name="Birney E."/>
            <person name="Mongin E."/>
            <person name="Ureta-Vidal A."/>
            <person name="Woodwark C."/>
            <person name="Zdobnov E."/>
            <person name="Bork P."/>
            <person name="Suyama M."/>
            <person name="Torrents D."/>
            <person name="Alexandersson M."/>
            <person name="Trask B.J."/>
            <person name="Young J.M."/>
            <person name="Huang H."/>
            <person name="Wang H."/>
            <person name="Xing H."/>
            <person name="Daniels S."/>
            <person name="Gietzen D."/>
            <person name="Schmidt J."/>
            <person name="Stevens K."/>
            <person name="Vitt U."/>
            <person name="Wingrove J."/>
            <person name="Camara F."/>
            <person name="Mar Alba M."/>
            <person name="Abril J.F."/>
            <person name="Guigo R."/>
            <person name="Smit A."/>
            <person name="Dubchak I."/>
            <person name="Rubin E.M."/>
            <person name="Couronne O."/>
            <person name="Poliakov A."/>
            <person name="Huebner N."/>
            <person name="Ganten D."/>
            <person name="Goesele C."/>
            <person name="Hummel O."/>
            <person name="Kreitler T."/>
            <person name="Lee Y.-A."/>
            <person name="Monti J."/>
            <person name="Schulz H."/>
            <person name="Zimdahl H."/>
            <person name="Himmelbauer H."/>
            <person name="Lehrach H."/>
            <person name="Jacob H.J."/>
            <person name="Bromberg S."/>
            <person name="Gullings-Handley J."/>
            <person name="Jensen-Seaman M.I."/>
            <person name="Kwitek A.E."/>
            <person name="Lazar J."/>
            <person name="Pasko D."/>
            <person name="Tonellato P.J."/>
            <person name="Twigger S."/>
            <person name="Ponting C.P."/>
            <person name="Duarte J.M."/>
            <person name="Rice S."/>
            <person name="Goodstadt L."/>
            <person name="Beatson S.A."/>
            <person name="Emes R.D."/>
            <person name="Winter E.E."/>
            <person name="Webber C."/>
            <person name="Brandt P."/>
            <person name="Nyakatura G."/>
            <person name="Adetobi M."/>
            <person name="Chiaromonte F."/>
            <person name="Elnitski L."/>
            <person name="Eswara P."/>
            <person name="Hardison R.C."/>
            <person name="Hou M."/>
            <person name="Kolbe D."/>
            <person name="Makova K."/>
            <person name="Miller W."/>
            <person name="Nekrutenko A."/>
            <person name="Riemer C."/>
            <person name="Schwartz S."/>
            <person name="Taylor J."/>
            <person name="Yang S."/>
            <person name="Zhang Y."/>
            <person name="Lindpaintner K."/>
            <person name="Andrews T.D."/>
            <person name="Caccamo M."/>
            <person name="Clamp M."/>
            <person name="Clarke L."/>
            <person name="Curwen V."/>
            <person name="Durbin R.M."/>
            <person name="Eyras E."/>
            <person name="Searle S.M."/>
            <person name="Cooper G.M."/>
            <person name="Batzoglou S."/>
            <person name="Brudno M."/>
            <person name="Sidow A."/>
            <person name="Stone E.A."/>
            <person name="Payseur B.A."/>
            <person name="Bourque G."/>
            <person name="Lopez-Otin C."/>
            <person name="Puente X.S."/>
            <person name="Chakrabarti K."/>
            <person name="Chatterji S."/>
            <person name="Dewey C."/>
            <person name="Pachter L."/>
            <person name="Bray N."/>
            <person name="Yap V.B."/>
            <person name="Caspi A."/>
            <person name="Tesler G."/>
            <person name="Pevzner P.A."/>
            <person name="Haussler D."/>
            <person name="Roskin K.M."/>
            <person name="Baertsch R."/>
            <person name="Clawson H."/>
            <person name="Furey T.S."/>
            <person name="Hinrichs A.S."/>
            <person name="Karolchik D."/>
            <person name="Kent W.J."/>
            <person name="Rosenbloom K.R."/>
            <person name="Trumbower H."/>
            <person name="Weirauch M."/>
            <person name="Cooper D.N."/>
            <person name="Stenson P.D."/>
            <person name="Ma B."/>
            <person name="Brent M."/>
            <person name="Arumugam M."/>
            <person name="Shteynberg D."/>
            <person name="Copley R.R."/>
            <person name="Taylor M.S."/>
            <person name="Riethman H."/>
            <person name="Mudunuri U."/>
            <person name="Peterson J."/>
            <person name="Guyer M."/>
            <person name="Felsenfeld A."/>
            <person name="Old S."/>
            <person name="Mockrin S."/>
            <person name="Collins F.S."/>
        </authorList>
    </citation>
    <scope>NUCLEOTIDE SEQUENCE [LARGE SCALE GENOMIC DNA]</scope>
    <source>
        <strain>Brown Norway</strain>
    </source>
</reference>
<reference key="2">
    <citation type="journal article" date="2004" name="Genome Res.">
        <title>The status, quality, and expansion of the NIH full-length cDNA project: the Mammalian Gene Collection (MGC).</title>
        <authorList>
            <consortium name="The MGC Project Team"/>
        </authorList>
    </citation>
    <scope>NUCLEOTIDE SEQUENCE [LARGE SCALE MRNA] (ISOFORM VEGF-B167)</scope>
    <source>
        <tissue>Kidney</tissue>
    </source>
</reference>
<reference key="3">
    <citation type="submission" date="1997-08" db="EMBL/GenBank/DDBJ databases">
        <title>Isolation and characterization of rat vascular endothelial growth factor B (VEGF-B).</title>
        <authorList>
            <person name="Weil J."/>
            <person name="Eschenhagen T."/>
            <person name="Mittmann C."/>
            <person name="Scholz H."/>
        </authorList>
    </citation>
    <scope>NUCLEOTIDE SEQUENCE [MRNA] OF 32-181 (ISOFORM VEGF-B167)</scope>
    <source>
        <tissue>Heart</tissue>
    </source>
</reference>
<reference key="4">
    <citation type="submission" date="1997-11" db="EMBL/GenBank/DDBJ databases">
        <authorList>
            <person name="Mandriota S.J."/>
            <person name="Pepper M.S."/>
        </authorList>
    </citation>
    <scope>NUCLEOTIDE SEQUENCE [MRNA] OF 51-186 (ISOFORM VEGF-B186)</scope>
    <source>
        <strain>Sprague-Dawley</strain>
        <tissue>Placenta</tissue>
    </source>
</reference>
<gene>
    <name type="primary">Vegfb</name>
    <name type="synonym">Vrf</name>
</gene>
<proteinExistence type="evidence at transcript level"/>
<name>VEGFB_RAT</name>
<comment type="function">
    <text evidence="1">Growth factor for endothelial cells. VEGF-B167 binds heparin and neuropilin-1 whereas the binding to neuropilin-1 of VEGF-B186 is regulated by proteolysis (By similarity).</text>
</comment>
<comment type="subunit">
    <text evidence="1">Homodimer; disulfide-linked. Can also form heterodimer with VEGF (By similarity).</text>
</comment>
<comment type="subcellular location">
    <subcellularLocation>
        <location evidence="1">Secreted</location>
    </subcellularLocation>
    <text evidence="1">Secreted but remains associated to cells or to the extracellular matrix unless released by heparin.</text>
</comment>
<comment type="alternative products">
    <event type="alternative splicing"/>
    <isoform>
        <id>O35485-1</id>
        <name>VEGF-B186</name>
        <sequence type="displayed"/>
    </isoform>
    <isoform>
        <id>O35485-2</id>
        <name>VEGF-B167</name>
        <sequence type="described" ref="VSP_016662"/>
    </isoform>
    <text>Additional isoforms seem to exist.</text>
</comment>
<comment type="similarity">
    <text evidence="6">Belongs to the PDGF/VEGF growth factor family.</text>
</comment>
<protein>
    <recommendedName>
        <fullName>Vascular endothelial growth factor B</fullName>
        <shortName>VEGF-B</shortName>
    </recommendedName>
    <alternativeName>
        <fullName>VEGF-related factor</fullName>
        <shortName>VRF</shortName>
    </alternativeName>
</protein>
<dbReference type="EMBL" id="AABR03002421">
    <property type="status" value="NOT_ANNOTATED_CDS"/>
    <property type="molecule type" value="Genomic_DNA"/>
</dbReference>
<dbReference type="EMBL" id="BC076395">
    <property type="protein sequence ID" value="AAH76395.1"/>
    <property type="molecule type" value="mRNA"/>
</dbReference>
<dbReference type="EMBL" id="AF022952">
    <property type="protein sequence ID" value="AAB95447.1"/>
    <property type="molecule type" value="mRNA"/>
</dbReference>
<dbReference type="EMBL" id="AF032925">
    <property type="protein sequence ID" value="AAB86884.1"/>
    <property type="molecule type" value="mRNA"/>
</dbReference>
<dbReference type="RefSeq" id="NP_446001.1">
    <molecule id="O35485-2"/>
    <property type="nucleotide sequence ID" value="NM_053549.1"/>
</dbReference>
<dbReference type="RefSeq" id="XP_006230972.1">
    <molecule id="O35485-1"/>
    <property type="nucleotide sequence ID" value="XM_006230910.5"/>
</dbReference>
<dbReference type="RefSeq" id="XP_006230973.1">
    <molecule id="O35485-1"/>
    <property type="nucleotide sequence ID" value="XM_006230911.5"/>
</dbReference>
<dbReference type="RefSeq" id="XP_038948908.1">
    <molecule id="O35485-1"/>
    <property type="nucleotide sequence ID" value="XM_039092980.2"/>
</dbReference>
<dbReference type="SMR" id="O35485"/>
<dbReference type="FunCoup" id="O35485">
    <property type="interactions" value="561"/>
</dbReference>
<dbReference type="STRING" id="10116.ENSRNOP00000049757"/>
<dbReference type="GlyGen" id="O35485">
    <property type="glycosylation" value="1 site"/>
</dbReference>
<dbReference type="iPTMnet" id="O35485"/>
<dbReference type="PhosphoSitePlus" id="O35485"/>
<dbReference type="PaxDb" id="10116-ENSRNOP00000049757"/>
<dbReference type="Ensembl" id="ENSRNOT00000050891.4">
    <molecule id="O35485-2"/>
    <property type="protein sequence ID" value="ENSRNOP00000049757.3"/>
    <property type="gene ID" value="ENSRNOG00000021156.5"/>
</dbReference>
<dbReference type="GeneID" id="89811"/>
<dbReference type="KEGG" id="rno:89811"/>
<dbReference type="UCSC" id="RGD:619799">
    <molecule id="O35485-1"/>
    <property type="organism name" value="rat"/>
</dbReference>
<dbReference type="AGR" id="RGD:619799"/>
<dbReference type="CTD" id="7423"/>
<dbReference type="RGD" id="619799">
    <property type="gene designation" value="Vegfb"/>
</dbReference>
<dbReference type="VEuPathDB" id="HostDB:ENSRNOG00000021156"/>
<dbReference type="eggNOG" id="ENOG502SU5Y">
    <property type="taxonomic scope" value="Eukaryota"/>
</dbReference>
<dbReference type="GeneTree" id="ENSGT00940000161844"/>
<dbReference type="HOGENOM" id="CLU_042996_2_0_1"/>
<dbReference type="InParanoid" id="O35485"/>
<dbReference type="PhylomeDB" id="O35485"/>
<dbReference type="TreeFam" id="TF319554"/>
<dbReference type="Reactome" id="R-RNO-114608">
    <property type="pathway name" value="Platelet degranulation"/>
</dbReference>
<dbReference type="Reactome" id="R-RNO-194313">
    <property type="pathway name" value="VEGF ligand-receptor interactions"/>
</dbReference>
<dbReference type="Reactome" id="R-RNO-195399">
    <property type="pathway name" value="VEGF binds to VEGFR leading to receptor dimerization"/>
</dbReference>
<dbReference type="PRO" id="PR:O35485"/>
<dbReference type="Proteomes" id="UP000002494">
    <property type="component" value="Chromosome 1"/>
</dbReference>
<dbReference type="Bgee" id="ENSRNOG00000021156">
    <property type="expression patterns" value="Expressed in heart and 19 other cell types or tissues"/>
</dbReference>
<dbReference type="GO" id="GO:0005576">
    <property type="term" value="C:extracellular region"/>
    <property type="evidence" value="ECO:0000266"/>
    <property type="project" value="RGD"/>
</dbReference>
<dbReference type="GO" id="GO:0005615">
    <property type="term" value="C:extracellular space"/>
    <property type="evidence" value="ECO:0000318"/>
    <property type="project" value="GO_Central"/>
</dbReference>
<dbReference type="GO" id="GO:0016020">
    <property type="term" value="C:membrane"/>
    <property type="evidence" value="ECO:0007669"/>
    <property type="project" value="InterPro"/>
</dbReference>
<dbReference type="GO" id="GO:0042056">
    <property type="term" value="F:chemoattractant activity"/>
    <property type="evidence" value="ECO:0000318"/>
    <property type="project" value="GO_Central"/>
</dbReference>
<dbReference type="GO" id="GO:0008083">
    <property type="term" value="F:growth factor activity"/>
    <property type="evidence" value="ECO:0000318"/>
    <property type="project" value="GO_Central"/>
</dbReference>
<dbReference type="GO" id="GO:0008201">
    <property type="term" value="F:heparin binding"/>
    <property type="evidence" value="ECO:0007669"/>
    <property type="project" value="UniProtKB-KW"/>
</dbReference>
<dbReference type="GO" id="GO:0042802">
    <property type="term" value="F:identical protein binding"/>
    <property type="evidence" value="ECO:0000266"/>
    <property type="project" value="RGD"/>
</dbReference>
<dbReference type="GO" id="GO:0043183">
    <property type="term" value="F:vascular endothelial growth factor receptor 1 binding"/>
    <property type="evidence" value="ECO:0000266"/>
    <property type="project" value="RGD"/>
</dbReference>
<dbReference type="GO" id="GO:0005172">
    <property type="term" value="F:vascular endothelial growth factor receptor binding"/>
    <property type="evidence" value="ECO:0000318"/>
    <property type="project" value="GO_Central"/>
</dbReference>
<dbReference type="GO" id="GO:0001525">
    <property type="term" value="P:angiogenesis"/>
    <property type="evidence" value="ECO:0000270"/>
    <property type="project" value="RGD"/>
</dbReference>
<dbReference type="GO" id="GO:0060048">
    <property type="term" value="P:cardiac muscle contraction"/>
    <property type="evidence" value="ECO:0000266"/>
    <property type="project" value="RGD"/>
</dbReference>
<dbReference type="GO" id="GO:0060976">
    <property type="term" value="P:coronary vasculature development"/>
    <property type="evidence" value="ECO:0000266"/>
    <property type="project" value="RGD"/>
</dbReference>
<dbReference type="GO" id="GO:0007507">
    <property type="term" value="P:heart development"/>
    <property type="evidence" value="ECO:0000266"/>
    <property type="project" value="RGD"/>
</dbReference>
<dbReference type="GO" id="GO:0050930">
    <property type="term" value="P:induction of positive chemotaxis"/>
    <property type="evidence" value="ECO:0000318"/>
    <property type="project" value="GO_Central"/>
</dbReference>
<dbReference type="GO" id="GO:0051781">
    <property type="term" value="P:positive regulation of cell division"/>
    <property type="evidence" value="ECO:0007669"/>
    <property type="project" value="UniProtKB-KW"/>
</dbReference>
<dbReference type="GO" id="GO:0060754">
    <property type="term" value="P:positive regulation of mast cell chemotaxis"/>
    <property type="evidence" value="ECO:0000318"/>
    <property type="project" value="GO_Central"/>
</dbReference>
<dbReference type="GO" id="GO:0035470">
    <property type="term" value="P:positive regulation of vascular wound healing"/>
    <property type="evidence" value="ECO:0000266"/>
    <property type="project" value="RGD"/>
</dbReference>
<dbReference type="GO" id="GO:0006493">
    <property type="term" value="P:protein O-linked glycosylation"/>
    <property type="evidence" value="ECO:0000266"/>
    <property type="project" value="RGD"/>
</dbReference>
<dbReference type="GO" id="GO:0001666">
    <property type="term" value="P:response to hypoxia"/>
    <property type="evidence" value="ECO:0000318"/>
    <property type="project" value="GO_Central"/>
</dbReference>
<dbReference type="GO" id="GO:0009410">
    <property type="term" value="P:response to xenobiotic stimulus"/>
    <property type="evidence" value="ECO:0000270"/>
    <property type="project" value="RGD"/>
</dbReference>
<dbReference type="GO" id="GO:0002040">
    <property type="term" value="P:sprouting angiogenesis"/>
    <property type="evidence" value="ECO:0000318"/>
    <property type="project" value="GO_Central"/>
</dbReference>
<dbReference type="GO" id="GO:0048010">
    <property type="term" value="P:vascular endothelial growth factor receptor signaling pathway"/>
    <property type="evidence" value="ECO:0000318"/>
    <property type="project" value="GO_Central"/>
</dbReference>
<dbReference type="GO" id="GO:0038084">
    <property type="term" value="P:vascular endothelial growth factor signaling pathway"/>
    <property type="evidence" value="ECO:0000318"/>
    <property type="project" value="GO_Central"/>
</dbReference>
<dbReference type="CDD" id="cd00135">
    <property type="entry name" value="PDGF"/>
    <property type="match status" value="1"/>
</dbReference>
<dbReference type="FunFam" id="2.10.90.10:FF:000030">
    <property type="entry name" value="Vascular endothelial growth factor B"/>
    <property type="match status" value="1"/>
</dbReference>
<dbReference type="Gene3D" id="2.10.90.10">
    <property type="entry name" value="Cystine-knot cytokines"/>
    <property type="match status" value="1"/>
</dbReference>
<dbReference type="InterPro" id="IPR029034">
    <property type="entry name" value="Cystine-knot_cytokine"/>
</dbReference>
<dbReference type="InterPro" id="IPR023581">
    <property type="entry name" value="PD_growth_factor_CS"/>
</dbReference>
<dbReference type="InterPro" id="IPR000072">
    <property type="entry name" value="PDGF/VEGF_dom"/>
</dbReference>
<dbReference type="InterPro" id="IPR050507">
    <property type="entry name" value="PDGF/VEGF_growth_factor"/>
</dbReference>
<dbReference type="PANTHER" id="PTHR12025">
    <property type="entry name" value="VASCULAR ENDOTHELIAL GROWTH FACTOR"/>
    <property type="match status" value="1"/>
</dbReference>
<dbReference type="PANTHER" id="PTHR12025:SF12">
    <property type="entry name" value="VASCULAR ENDOTHELIAL GROWTH FACTOR B"/>
    <property type="match status" value="1"/>
</dbReference>
<dbReference type="Pfam" id="PF00341">
    <property type="entry name" value="PDGF"/>
    <property type="match status" value="1"/>
</dbReference>
<dbReference type="SMART" id="SM00141">
    <property type="entry name" value="PDGF"/>
    <property type="match status" value="1"/>
</dbReference>
<dbReference type="SUPFAM" id="SSF57501">
    <property type="entry name" value="Cystine-knot cytokines"/>
    <property type="match status" value="1"/>
</dbReference>
<dbReference type="PROSITE" id="PS00249">
    <property type="entry name" value="PDGF_1"/>
    <property type="match status" value="1"/>
</dbReference>
<dbReference type="PROSITE" id="PS50278">
    <property type="entry name" value="PDGF_2"/>
    <property type="match status" value="1"/>
</dbReference>
<feature type="signal peptide" evidence="2">
    <location>
        <begin position="1"/>
        <end position="21"/>
    </location>
</feature>
<feature type="chain" id="PRO_0000045174" description="Vascular endothelial growth factor B">
    <location>
        <begin position="22"/>
        <end position="207"/>
    </location>
</feature>
<feature type="region of interest" description="Disordered" evidence="3">
    <location>
        <begin position="140"/>
        <end position="182"/>
    </location>
</feature>
<feature type="disulfide bond" description="Interchain" evidence="1">
    <location>
        <position position="72"/>
    </location>
</feature>
<feature type="disulfide bond" evidence="1">
    <location>
        <begin position="78"/>
        <end position="122"/>
    </location>
</feature>
<feature type="disulfide bond" description="Interchain" evidence="1">
    <location>
        <position position="81"/>
    </location>
</feature>
<feature type="disulfide bond" evidence="1">
    <location>
        <begin position="82"/>
        <end position="124"/>
    </location>
</feature>
<feature type="splice variant" id="VSP_016662" description="In isoform VEGF-B167." evidence="4 5">
    <original>RVAIPHHRPQPRSVLSWDSAPGASSPADIIHPTPAPGPSAHAAPSAVSALIPGPAVAAADAAASSIAKGGA</original>
    <variation>SPRTLCPRCTQRRQRPDPRTCRCRCRRRRFLHCQGRGLELNPDTCRSSET</variation>
    <location>
        <begin position="137"/>
        <end position="207"/>
    </location>
</feature>
<feature type="sequence conflict" description="In Ref. 3; AAB95447." evidence="6" ref="3">
    <original>QK</original>
    <variation>KR</variation>
    <location>
        <begin position="32"/>
        <end position="33"/>
    </location>
</feature>
<feature type="sequence conflict" description="In Ref. 3; AAB95447." evidence="6" ref="3">
    <original>L</original>
    <variation>F</variation>
    <location>
        <position position="60"/>
    </location>
</feature>
<feature type="sequence conflict" description="In Ref. 3; AAB95447." evidence="6" ref="3">
    <original>L</original>
    <variation>F</variation>
    <location>
        <position position="68"/>
    </location>
</feature>
<feature type="sequence conflict" description="In Ref. 4; AAB86884." evidence="6" ref="4">
    <original>K</original>
    <variation>R</variation>
    <location>
        <position position="129"/>
    </location>
</feature>
<organism>
    <name type="scientific">Rattus norvegicus</name>
    <name type="common">Rat</name>
    <dbReference type="NCBI Taxonomy" id="10116"/>
    <lineage>
        <taxon>Eukaryota</taxon>
        <taxon>Metazoa</taxon>
        <taxon>Chordata</taxon>
        <taxon>Craniata</taxon>
        <taxon>Vertebrata</taxon>
        <taxon>Euteleostomi</taxon>
        <taxon>Mammalia</taxon>
        <taxon>Eutheria</taxon>
        <taxon>Euarchontoglires</taxon>
        <taxon>Glires</taxon>
        <taxon>Rodentia</taxon>
        <taxon>Myomorpha</taxon>
        <taxon>Muroidea</taxon>
        <taxon>Muridae</taxon>
        <taxon>Murinae</taxon>
        <taxon>Rattus</taxon>
    </lineage>
</organism>
<keyword id="KW-0025">Alternative splicing</keyword>
<keyword id="KW-1015">Disulfide bond</keyword>
<keyword id="KW-0339">Growth factor</keyword>
<keyword id="KW-0358">Heparin-binding</keyword>
<keyword id="KW-0497">Mitogen</keyword>
<keyword id="KW-1185">Reference proteome</keyword>
<keyword id="KW-0964">Secreted</keyword>
<keyword id="KW-0732">Signal</keyword>
<sequence length="207" mass="21869">MSPLLRRLLLVALLQLACTQAPVSQFDGPSHQKKVVSWIDVYARATCQPREVVVPLSMELMGNVVKQLVPSCVTVQRCGGCCPDDGLECVPIGQHQVRMQILMIQYPSSQLGEMSLEEHSQCECRPKRKESAVKPDRVAIPHHRPQPRSVLSWDSAPGASSPADIIHPTPAPGPSAHAAPSAVSALIPGPAVAAADAAASSIAKGGA</sequence>
<accession>O35485</accession>
<accession>O54881</accession>
<accession>Q6DGF3</accession>
<evidence type="ECO:0000250" key="1"/>
<evidence type="ECO:0000255" key="2"/>
<evidence type="ECO:0000256" key="3">
    <source>
        <dbReference type="SAM" id="MobiDB-lite"/>
    </source>
</evidence>
<evidence type="ECO:0000303" key="4">
    <source>
    </source>
</evidence>
<evidence type="ECO:0000303" key="5">
    <source ref="3"/>
</evidence>
<evidence type="ECO:0000305" key="6"/>